<gene>
    <name type="primary">PDIK1L</name>
</gene>
<sequence>MVSSQPKYDLIREVGRGSYGVVYEAVIRKTSARVAVKKIRCHAPENVELALREFWALSSIKSQHPNVIHLEECILQKDGMVQKMSHGSNSSLYLQLVETSLKGEIAFDPRSAYYLWFVMDFCDGGDMNEYLLSRKPNRKTNTSFMLQLSSALAFLHKNQIIHRDLKPDNILISQTRLDTSDLEPTLKVADGLSKVCSASGQNPEEPVSVNKCFLSTACGTDFYMAPEVWEGHYTAKADIFALGIIIWAMLERITFIDTETKKELLGSYVKQGTEIVPVGEALLENPKMELLIPVKKKSMNGRMKQLIKEMLAANPQDRPDAFELELRLVQIAFKDSSWET</sequence>
<protein>
    <recommendedName>
        <fullName>Serine/threonine-protein kinase PDIK1L</fullName>
        <ecNumber>2.7.11.1</ecNumber>
    </recommendedName>
    <alternativeName>
        <fullName>PDLIM1-interacting kinase 1-like</fullName>
    </alternativeName>
</protein>
<comment type="catalytic activity">
    <reaction>
        <text>L-seryl-[protein] + ATP = O-phospho-L-seryl-[protein] + ADP + H(+)</text>
        <dbReference type="Rhea" id="RHEA:17989"/>
        <dbReference type="Rhea" id="RHEA-COMP:9863"/>
        <dbReference type="Rhea" id="RHEA-COMP:11604"/>
        <dbReference type="ChEBI" id="CHEBI:15378"/>
        <dbReference type="ChEBI" id="CHEBI:29999"/>
        <dbReference type="ChEBI" id="CHEBI:30616"/>
        <dbReference type="ChEBI" id="CHEBI:83421"/>
        <dbReference type="ChEBI" id="CHEBI:456216"/>
        <dbReference type="EC" id="2.7.11.1"/>
    </reaction>
</comment>
<comment type="catalytic activity">
    <reaction>
        <text>L-threonyl-[protein] + ATP = O-phospho-L-threonyl-[protein] + ADP + H(+)</text>
        <dbReference type="Rhea" id="RHEA:46608"/>
        <dbReference type="Rhea" id="RHEA-COMP:11060"/>
        <dbReference type="Rhea" id="RHEA-COMP:11605"/>
        <dbReference type="ChEBI" id="CHEBI:15378"/>
        <dbReference type="ChEBI" id="CHEBI:30013"/>
        <dbReference type="ChEBI" id="CHEBI:30616"/>
        <dbReference type="ChEBI" id="CHEBI:61977"/>
        <dbReference type="ChEBI" id="CHEBI:456216"/>
        <dbReference type="EC" id="2.7.11.1"/>
    </reaction>
</comment>
<comment type="subcellular location">
    <subcellularLocation>
        <location evidence="1">Nucleus</location>
    </subcellularLocation>
</comment>
<comment type="similarity">
    <text evidence="2">Belongs to the protein kinase superfamily. Ser/Thr protein kinase family.</text>
</comment>
<evidence type="ECO:0000250" key="1"/>
<evidence type="ECO:0000255" key="2">
    <source>
        <dbReference type="PROSITE-ProRule" id="PRU00159"/>
    </source>
</evidence>
<evidence type="ECO:0000255" key="3">
    <source>
        <dbReference type="PROSITE-ProRule" id="PRU10027"/>
    </source>
</evidence>
<feature type="chain" id="PRO_0000086496" description="Serine/threonine-protein kinase PDIK1L">
    <location>
        <begin position="1"/>
        <end position="340"/>
    </location>
</feature>
<feature type="domain" description="Protein kinase" evidence="2">
    <location>
        <begin position="8"/>
        <end position="333"/>
    </location>
</feature>
<feature type="active site" description="Proton acceptor" evidence="2 3">
    <location>
        <position position="164"/>
    </location>
</feature>
<feature type="binding site" evidence="2">
    <location>
        <begin position="14"/>
        <end position="22"/>
    </location>
    <ligand>
        <name>ATP</name>
        <dbReference type="ChEBI" id="CHEBI:30616"/>
    </ligand>
</feature>
<feature type="binding site" evidence="2">
    <location>
        <position position="37"/>
    </location>
    <ligand>
        <name>ATP</name>
        <dbReference type="ChEBI" id="CHEBI:30616"/>
    </ligand>
</feature>
<organism>
    <name type="scientific">Pongo abelii</name>
    <name type="common">Sumatran orangutan</name>
    <name type="synonym">Pongo pygmaeus abelii</name>
    <dbReference type="NCBI Taxonomy" id="9601"/>
    <lineage>
        <taxon>Eukaryota</taxon>
        <taxon>Metazoa</taxon>
        <taxon>Chordata</taxon>
        <taxon>Craniata</taxon>
        <taxon>Vertebrata</taxon>
        <taxon>Euteleostomi</taxon>
        <taxon>Mammalia</taxon>
        <taxon>Eutheria</taxon>
        <taxon>Euarchontoglires</taxon>
        <taxon>Primates</taxon>
        <taxon>Haplorrhini</taxon>
        <taxon>Catarrhini</taxon>
        <taxon>Hominidae</taxon>
        <taxon>Pongo</taxon>
    </lineage>
</organism>
<reference key="1">
    <citation type="submission" date="2004-11" db="EMBL/GenBank/DDBJ databases">
        <authorList>
            <consortium name="The German cDNA consortium"/>
        </authorList>
    </citation>
    <scope>NUCLEOTIDE SEQUENCE [LARGE SCALE MRNA]</scope>
    <source>
        <tissue>Kidney</tissue>
    </source>
</reference>
<dbReference type="EC" id="2.7.11.1"/>
<dbReference type="EMBL" id="CR857450">
    <property type="protein sequence ID" value="CAH89741.1"/>
    <property type="status" value="ALT_SEQ"/>
    <property type="molecule type" value="mRNA"/>
</dbReference>
<dbReference type="SMR" id="Q5RER6"/>
<dbReference type="FunCoup" id="Q5RER6">
    <property type="interactions" value="2606"/>
</dbReference>
<dbReference type="STRING" id="9601.ENSPPYP00000001958"/>
<dbReference type="eggNOG" id="KOG0595">
    <property type="taxonomic scope" value="Eukaryota"/>
</dbReference>
<dbReference type="InParanoid" id="Q5RER6"/>
<dbReference type="Proteomes" id="UP000001595">
    <property type="component" value="Unplaced"/>
</dbReference>
<dbReference type="GO" id="GO:0005737">
    <property type="term" value="C:cytoplasm"/>
    <property type="evidence" value="ECO:0007669"/>
    <property type="project" value="TreeGrafter"/>
</dbReference>
<dbReference type="GO" id="GO:0005634">
    <property type="term" value="C:nucleus"/>
    <property type="evidence" value="ECO:0007669"/>
    <property type="project" value="UniProtKB-SubCell"/>
</dbReference>
<dbReference type="GO" id="GO:0005524">
    <property type="term" value="F:ATP binding"/>
    <property type="evidence" value="ECO:0007669"/>
    <property type="project" value="UniProtKB-KW"/>
</dbReference>
<dbReference type="GO" id="GO:0106310">
    <property type="term" value="F:protein serine kinase activity"/>
    <property type="evidence" value="ECO:0007669"/>
    <property type="project" value="RHEA"/>
</dbReference>
<dbReference type="GO" id="GO:0004674">
    <property type="term" value="F:protein serine/threonine kinase activity"/>
    <property type="evidence" value="ECO:0007669"/>
    <property type="project" value="UniProtKB-KW"/>
</dbReference>
<dbReference type="GO" id="GO:0110031">
    <property type="term" value="P:negative regulation of G2/MI transition of meiotic cell cycle"/>
    <property type="evidence" value="ECO:0007669"/>
    <property type="project" value="TreeGrafter"/>
</dbReference>
<dbReference type="FunFam" id="1.10.510.10:FF:000174">
    <property type="entry name" value="Serine/threonine-protein kinase PDIK1L"/>
    <property type="match status" value="1"/>
</dbReference>
<dbReference type="FunFam" id="3.30.200.20:FF:000165">
    <property type="entry name" value="Serine/threonine-protein kinase PDIK1L"/>
    <property type="match status" value="1"/>
</dbReference>
<dbReference type="Gene3D" id="3.30.200.20">
    <property type="entry name" value="Phosphorylase Kinase, domain 1"/>
    <property type="match status" value="1"/>
</dbReference>
<dbReference type="Gene3D" id="1.10.510.10">
    <property type="entry name" value="Transferase(Phosphotransferase) domain 1"/>
    <property type="match status" value="1"/>
</dbReference>
<dbReference type="InterPro" id="IPR050339">
    <property type="entry name" value="CC_SR_Kinase"/>
</dbReference>
<dbReference type="InterPro" id="IPR011009">
    <property type="entry name" value="Kinase-like_dom_sf"/>
</dbReference>
<dbReference type="InterPro" id="IPR000719">
    <property type="entry name" value="Prot_kinase_dom"/>
</dbReference>
<dbReference type="InterPro" id="IPR017441">
    <property type="entry name" value="Protein_kinase_ATP_BS"/>
</dbReference>
<dbReference type="InterPro" id="IPR008271">
    <property type="entry name" value="Ser/Thr_kinase_AS"/>
</dbReference>
<dbReference type="PANTHER" id="PTHR11042">
    <property type="entry name" value="EUKARYOTIC TRANSLATION INITIATION FACTOR 2-ALPHA KINASE EIF2-ALPHA KINASE -RELATED"/>
    <property type="match status" value="1"/>
</dbReference>
<dbReference type="PANTHER" id="PTHR11042:SF58">
    <property type="entry name" value="SERINE_THREONINE-PROTEIN KINASE PDIK1L"/>
    <property type="match status" value="1"/>
</dbReference>
<dbReference type="Pfam" id="PF00069">
    <property type="entry name" value="Pkinase"/>
    <property type="match status" value="1"/>
</dbReference>
<dbReference type="PIRSF" id="PIRSF000654">
    <property type="entry name" value="Integrin-linked_kinase"/>
    <property type="match status" value="1"/>
</dbReference>
<dbReference type="SMART" id="SM00220">
    <property type="entry name" value="S_TKc"/>
    <property type="match status" value="1"/>
</dbReference>
<dbReference type="SUPFAM" id="SSF56112">
    <property type="entry name" value="Protein kinase-like (PK-like)"/>
    <property type="match status" value="1"/>
</dbReference>
<dbReference type="PROSITE" id="PS00107">
    <property type="entry name" value="PROTEIN_KINASE_ATP"/>
    <property type="match status" value="1"/>
</dbReference>
<dbReference type="PROSITE" id="PS50011">
    <property type="entry name" value="PROTEIN_KINASE_DOM"/>
    <property type="match status" value="1"/>
</dbReference>
<dbReference type="PROSITE" id="PS00108">
    <property type="entry name" value="PROTEIN_KINASE_ST"/>
    <property type="match status" value="1"/>
</dbReference>
<proteinExistence type="evidence at transcript level"/>
<accession>Q5RER6</accession>
<name>PDK1L_PONAB</name>
<keyword id="KW-0067">ATP-binding</keyword>
<keyword id="KW-0418">Kinase</keyword>
<keyword id="KW-0547">Nucleotide-binding</keyword>
<keyword id="KW-0539">Nucleus</keyword>
<keyword id="KW-1185">Reference proteome</keyword>
<keyword id="KW-0723">Serine/threonine-protein kinase</keyword>
<keyword id="KW-0808">Transferase</keyword>